<dbReference type="EMBL" id="CH477230">
    <property type="protein sequence ID" value="EAT46978.1"/>
    <property type="molecule type" value="Genomic_DNA"/>
</dbReference>
<dbReference type="RefSeq" id="XP_001654224.1">
    <property type="nucleotide sequence ID" value="XM_001654174.1"/>
</dbReference>
<dbReference type="SMR" id="Q17JT4"/>
<dbReference type="FunCoup" id="Q17JT4">
    <property type="interactions" value="1845"/>
</dbReference>
<dbReference type="STRING" id="7159.Q17JT4"/>
<dbReference type="PaxDb" id="7159-AAEL001883-PA"/>
<dbReference type="GeneID" id="5572828"/>
<dbReference type="KEGG" id="aag:5572828"/>
<dbReference type="CTD" id="9440"/>
<dbReference type="VEuPathDB" id="VectorBase:AAEL001883"/>
<dbReference type="eggNOG" id="KOG4512">
    <property type="taxonomic scope" value="Eukaryota"/>
</dbReference>
<dbReference type="HOGENOM" id="CLU_028003_1_0_1"/>
<dbReference type="InParanoid" id="Q17JT4"/>
<dbReference type="OMA" id="HMSYEPQ"/>
<dbReference type="OrthoDB" id="10058398at2759"/>
<dbReference type="PhylomeDB" id="Q17JT4"/>
<dbReference type="Proteomes" id="UP000008820">
    <property type="component" value="Unassembled WGS sequence"/>
</dbReference>
<dbReference type="Proteomes" id="UP000682892">
    <property type="component" value="Unassembled WGS sequence"/>
</dbReference>
<dbReference type="GO" id="GO:0070847">
    <property type="term" value="C:core mediator complex"/>
    <property type="evidence" value="ECO:0007669"/>
    <property type="project" value="TreeGrafter"/>
</dbReference>
<dbReference type="GO" id="GO:0016592">
    <property type="term" value="C:mediator complex"/>
    <property type="evidence" value="ECO:0007669"/>
    <property type="project" value="InterPro"/>
</dbReference>
<dbReference type="GO" id="GO:0003712">
    <property type="term" value="F:transcription coregulator activity"/>
    <property type="evidence" value="ECO:0007669"/>
    <property type="project" value="InterPro"/>
</dbReference>
<dbReference type="GO" id="GO:0006357">
    <property type="term" value="P:regulation of transcription by RNA polymerase II"/>
    <property type="evidence" value="ECO:0007669"/>
    <property type="project" value="InterPro"/>
</dbReference>
<dbReference type="InterPro" id="IPR019313">
    <property type="entry name" value="Mediator_Med17"/>
</dbReference>
<dbReference type="PANTHER" id="PTHR13114">
    <property type="entry name" value="MEDIATOR OF RNA POLYMERASE II TRANSCRIPTION SUBUNIT 17"/>
    <property type="match status" value="1"/>
</dbReference>
<dbReference type="PANTHER" id="PTHR13114:SF7">
    <property type="entry name" value="MEDIATOR OF RNA POLYMERASE II TRANSCRIPTION SUBUNIT 17"/>
    <property type="match status" value="1"/>
</dbReference>
<dbReference type="Pfam" id="PF10156">
    <property type="entry name" value="Med17"/>
    <property type="match status" value="1"/>
</dbReference>
<name>MED17_AEDAE</name>
<protein>
    <recommendedName>
        <fullName>Mediator of RNA polymerase II transcription subunit 17</fullName>
    </recommendedName>
    <alternativeName>
        <fullName>Mediator complex subunit 17</fullName>
    </alternativeName>
</protein>
<keyword id="KW-0010">Activator</keyword>
<keyword id="KW-0539">Nucleus</keyword>
<keyword id="KW-1185">Reference proteome</keyword>
<keyword id="KW-0804">Transcription</keyword>
<keyword id="KW-0805">Transcription regulation</keyword>
<organism>
    <name type="scientific">Aedes aegypti</name>
    <name type="common">Yellowfever mosquito</name>
    <name type="synonym">Culex aegypti</name>
    <dbReference type="NCBI Taxonomy" id="7159"/>
    <lineage>
        <taxon>Eukaryota</taxon>
        <taxon>Metazoa</taxon>
        <taxon>Ecdysozoa</taxon>
        <taxon>Arthropoda</taxon>
        <taxon>Hexapoda</taxon>
        <taxon>Insecta</taxon>
        <taxon>Pterygota</taxon>
        <taxon>Neoptera</taxon>
        <taxon>Endopterygota</taxon>
        <taxon>Diptera</taxon>
        <taxon>Nematocera</taxon>
        <taxon>Culicoidea</taxon>
        <taxon>Culicidae</taxon>
        <taxon>Culicinae</taxon>
        <taxon>Aedini</taxon>
        <taxon>Aedes</taxon>
        <taxon>Stegomyia</taxon>
    </lineage>
</organism>
<reference key="1">
    <citation type="journal article" date="2007" name="Science">
        <title>Genome sequence of Aedes aegypti, a major arbovirus vector.</title>
        <authorList>
            <person name="Nene V."/>
            <person name="Wortman J.R."/>
            <person name="Lawson D."/>
            <person name="Haas B.J."/>
            <person name="Kodira C.D."/>
            <person name="Tu Z.J."/>
            <person name="Loftus B.J."/>
            <person name="Xi Z."/>
            <person name="Megy K."/>
            <person name="Grabherr M."/>
            <person name="Ren Q."/>
            <person name="Zdobnov E.M."/>
            <person name="Lobo N.F."/>
            <person name="Campbell K.S."/>
            <person name="Brown S.E."/>
            <person name="Bonaldo M.F."/>
            <person name="Zhu J."/>
            <person name="Sinkins S.P."/>
            <person name="Hogenkamp D.G."/>
            <person name="Amedeo P."/>
            <person name="Arensburger P."/>
            <person name="Atkinson P.W."/>
            <person name="Bidwell S.L."/>
            <person name="Biedler J."/>
            <person name="Birney E."/>
            <person name="Bruggner R.V."/>
            <person name="Costas J."/>
            <person name="Coy M.R."/>
            <person name="Crabtree J."/>
            <person name="Crawford M."/>
            <person name="DeBruyn B."/>
            <person name="DeCaprio D."/>
            <person name="Eiglmeier K."/>
            <person name="Eisenstadt E."/>
            <person name="El-Dorry H."/>
            <person name="Gelbart W.M."/>
            <person name="Gomes S.L."/>
            <person name="Hammond M."/>
            <person name="Hannick L.I."/>
            <person name="Hogan J.R."/>
            <person name="Holmes M.H."/>
            <person name="Jaffe D."/>
            <person name="Johnston S.J."/>
            <person name="Kennedy R.C."/>
            <person name="Koo H."/>
            <person name="Kravitz S."/>
            <person name="Kriventseva E.V."/>
            <person name="Kulp D."/>
            <person name="Labutti K."/>
            <person name="Lee E."/>
            <person name="Li S."/>
            <person name="Lovin D.D."/>
            <person name="Mao C."/>
            <person name="Mauceli E."/>
            <person name="Menck C.F."/>
            <person name="Miller J.R."/>
            <person name="Montgomery P."/>
            <person name="Mori A."/>
            <person name="Nascimento A.L."/>
            <person name="Naveira H.F."/>
            <person name="Nusbaum C."/>
            <person name="O'Leary S.B."/>
            <person name="Orvis J."/>
            <person name="Pertea M."/>
            <person name="Quesneville H."/>
            <person name="Reidenbach K.R."/>
            <person name="Rogers Y.-H.C."/>
            <person name="Roth C.W."/>
            <person name="Schneider J.R."/>
            <person name="Schatz M."/>
            <person name="Shumway M."/>
            <person name="Stanke M."/>
            <person name="Stinson E.O."/>
            <person name="Tubio J.M.C."/>
            <person name="Vanzee J.P."/>
            <person name="Verjovski-Almeida S."/>
            <person name="Werner D."/>
            <person name="White O.R."/>
            <person name="Wyder S."/>
            <person name="Zeng Q."/>
            <person name="Zhao Q."/>
            <person name="Zhao Y."/>
            <person name="Hill C.A."/>
            <person name="Raikhel A.S."/>
            <person name="Soares M.B."/>
            <person name="Knudson D.L."/>
            <person name="Lee N.H."/>
            <person name="Galagan J."/>
            <person name="Salzberg S.L."/>
            <person name="Paulsen I.T."/>
            <person name="Dimopoulos G."/>
            <person name="Collins F.H."/>
            <person name="Bruce B."/>
            <person name="Fraser-Liggett C.M."/>
            <person name="Severson D.W."/>
        </authorList>
    </citation>
    <scope>NUCLEOTIDE SEQUENCE [LARGE SCALE GENOMIC DNA]</scope>
    <source>
        <strain>LVPib12</strain>
    </source>
</reference>
<comment type="function">
    <text evidence="1">Component of the Mediator complex, a coactivator involved in the regulated transcription of nearly all RNA polymerase II-dependent genes. Mediator functions as a bridge to convey information from gene-specific regulatory proteins to the basal RNA polymerase II transcription machinery. Mediator is recruited to promoters by direct interactions with regulatory proteins and serves as a scaffold for the assembly of a functional preinitiation complex with RNA polymerase II and the general transcription factors (By similarity).</text>
</comment>
<comment type="subunit">
    <text evidence="1">Component of the Mediator complex.</text>
</comment>
<comment type="subcellular location">
    <subcellularLocation>
        <location evidence="1">Nucleus</location>
    </subcellularLocation>
</comment>
<comment type="similarity">
    <text evidence="2">Belongs to the Mediator complex subunit 17 family.</text>
</comment>
<accession>Q17JT4</accession>
<evidence type="ECO:0000250" key="1"/>
<evidence type="ECO:0000305" key="2"/>
<feature type="chain" id="PRO_0000304704" description="Mediator of RNA polymerase II transcription subunit 17">
    <location>
        <begin position="1"/>
        <end position="645"/>
    </location>
</feature>
<gene>
    <name type="primary">MED17</name>
    <name type="ORF">AAEL001883</name>
</gene>
<proteinExistence type="inferred from homology"/>
<sequence length="645" mass="72113">MSVSANISVEAPIESQIQEIAYDGTEIYQLPPTLSEHLAKCAAKIDFSKTVNDLDLVKQSIKKEDEKKDDDSKDAAAHFQSSLWPWDSVRNKLKDAFTEVCVLSDVLAIAKEKRFMVLDPIPQEPPEVKQMVQVYARKKALASAANILLTGAERLKTAHTDQGGNRSAPDFHIELLRLRRNWRLKKVSNTIIGDLSYRTAGSKFMHPGMFEVTKAEDEDNNDENASAAAGTIATTGTAPEPKLTSLKVNVPTELQGVAFIKVITQKDQGDLCTATLNMMGSTQLFPQAGEWQKTLDFAQNVLFCKELFNQLAREAVQLQAPIPHVVVGNQIRATLLPGIQLVISLCHSTSSDSNNSSEPIKDHDHVLEHSLHQLLREFHHKNTHHPFPHPASAPLGPSKKRMLAGPSAFDRYELLEMTKSQTLLEQIIAQAQHIFTRRRAQYVLDTLAREVKDPQITSHWNAMNSPTMSCVKINITSHGYDANLRTSLVIHVKERSLKCICRDGRIMHMSYEMQELRDLILYQISQHQIVCLQSLAKCMAWQILSNSSHLGIGSVEPLGNASSCVLASPNSDRLIAVQVRCDPQLDVKVYIAQSPGKDFFPGSLVQGRHWEHLGGHFKELRFDKMEGKNFHNKMEFLMASLTSQT</sequence>